<comment type="function">
    <text evidence="2">Component of the ubiquinol-cytochrome c reductase complex (complex III or cytochrome b-c1 complex) that is part of the mitochondrial respiratory chain. The b-c1 complex mediates electron transfer from ubiquinol to cytochrome c. Contributes to the generation of a proton gradient across the mitochondrial membrane that is then used for ATP synthesis.</text>
</comment>
<comment type="cofactor">
    <cofactor evidence="2">
        <name>heme b</name>
        <dbReference type="ChEBI" id="CHEBI:60344"/>
    </cofactor>
    <text evidence="2">Binds 2 heme b groups non-covalently.</text>
</comment>
<comment type="subunit">
    <text evidence="2">The cytochrome bc1 complex contains 11 subunits: 3 respiratory subunits (MT-CYB, CYC1 and UQCRFS1), 2 core proteins (UQCRC1 and UQCRC2) and 6 low-molecular weight proteins (UQCRH/QCR6, UQCRB/QCR7, UQCRQ/QCR8, UQCR10/QCR9, UQCR11/QCR10 and a cleavage product of UQCRFS1). This cytochrome bc1 complex then forms a dimer.</text>
</comment>
<comment type="subcellular location">
    <subcellularLocation>
        <location evidence="2">Mitochondrion inner membrane</location>
        <topology evidence="2">Multi-pass membrane protein</topology>
    </subcellularLocation>
</comment>
<comment type="miscellaneous">
    <text evidence="1">Heme 1 (or BL or b562) is low-potential and absorbs at about 562 nm, and heme 2 (or BH or b566) is high-potential and absorbs at about 566 nm.</text>
</comment>
<comment type="similarity">
    <text evidence="3 4">Belongs to the cytochrome b family.</text>
</comment>
<comment type="caution">
    <text evidence="2">The full-length protein contains only eight transmembrane helices, not nine as predicted by bioinformatics tools.</text>
</comment>
<feature type="chain" id="PRO_0000255121" description="Cytochrome b">
    <location>
        <begin position="1"/>
        <end position="381"/>
    </location>
</feature>
<feature type="transmembrane region" description="Helical" evidence="2">
    <location>
        <begin position="33"/>
        <end position="53"/>
    </location>
</feature>
<feature type="transmembrane region" description="Helical" evidence="2">
    <location>
        <begin position="77"/>
        <end position="98"/>
    </location>
</feature>
<feature type="transmembrane region" description="Helical" evidence="2">
    <location>
        <begin position="113"/>
        <end position="133"/>
    </location>
</feature>
<feature type="transmembrane region" description="Helical" evidence="2">
    <location>
        <begin position="178"/>
        <end position="198"/>
    </location>
</feature>
<feature type="transmembrane region" description="Helical" evidence="2">
    <location>
        <begin position="226"/>
        <end position="246"/>
    </location>
</feature>
<feature type="transmembrane region" description="Helical" evidence="2">
    <location>
        <begin position="288"/>
        <end position="308"/>
    </location>
</feature>
<feature type="transmembrane region" description="Helical" evidence="2">
    <location>
        <begin position="320"/>
        <end position="340"/>
    </location>
</feature>
<feature type="transmembrane region" description="Helical" evidence="2">
    <location>
        <begin position="347"/>
        <end position="367"/>
    </location>
</feature>
<feature type="binding site" description="axial binding residue" evidence="2">
    <location>
        <position position="83"/>
    </location>
    <ligand>
        <name>heme b</name>
        <dbReference type="ChEBI" id="CHEBI:60344"/>
        <label>b562</label>
    </ligand>
    <ligandPart>
        <name>Fe</name>
        <dbReference type="ChEBI" id="CHEBI:18248"/>
    </ligandPart>
</feature>
<feature type="binding site" description="axial binding residue" evidence="2">
    <location>
        <position position="97"/>
    </location>
    <ligand>
        <name>heme b</name>
        <dbReference type="ChEBI" id="CHEBI:60344"/>
        <label>b566</label>
    </ligand>
    <ligandPart>
        <name>Fe</name>
        <dbReference type="ChEBI" id="CHEBI:18248"/>
    </ligandPart>
</feature>
<feature type="binding site" description="axial binding residue" evidence="2">
    <location>
        <position position="182"/>
    </location>
    <ligand>
        <name>heme b</name>
        <dbReference type="ChEBI" id="CHEBI:60344"/>
        <label>b562</label>
    </ligand>
    <ligandPart>
        <name>Fe</name>
        <dbReference type="ChEBI" id="CHEBI:18248"/>
    </ligandPart>
</feature>
<feature type="binding site" description="axial binding residue" evidence="2">
    <location>
        <position position="196"/>
    </location>
    <ligand>
        <name>heme b</name>
        <dbReference type="ChEBI" id="CHEBI:60344"/>
        <label>b566</label>
    </ligand>
    <ligandPart>
        <name>Fe</name>
        <dbReference type="ChEBI" id="CHEBI:18248"/>
    </ligandPart>
</feature>
<feature type="binding site" evidence="2">
    <location>
        <position position="201"/>
    </location>
    <ligand>
        <name>a ubiquinone</name>
        <dbReference type="ChEBI" id="CHEBI:16389"/>
    </ligand>
</feature>
<feature type="sequence variant" description="In strain: Isolate SA 03.">
    <original>I</original>
    <variation>T</variation>
    <location>
        <position position="323"/>
    </location>
</feature>
<organism>
    <name type="scientific">Phyllotis bonariensis</name>
    <name type="common">Leaf-eared mouse</name>
    <dbReference type="NCBI Taxonomy" id="327504"/>
    <lineage>
        <taxon>Eukaryota</taxon>
        <taxon>Metazoa</taxon>
        <taxon>Chordata</taxon>
        <taxon>Craniata</taxon>
        <taxon>Vertebrata</taxon>
        <taxon>Euteleostomi</taxon>
        <taxon>Mammalia</taxon>
        <taxon>Eutheria</taxon>
        <taxon>Euarchontoglires</taxon>
        <taxon>Glires</taxon>
        <taxon>Rodentia</taxon>
        <taxon>Myomorpha</taxon>
        <taxon>Muroidea</taxon>
        <taxon>Cricetidae</taxon>
        <taxon>Sigmodontinae</taxon>
        <taxon>Phyllotis</taxon>
    </lineage>
</organism>
<reference key="1">
    <citation type="submission" date="2005-03" db="EMBL/GenBank/DDBJ databases">
        <title>A molecular reappraisal of the systematics of the leaf-eared mice Phyllotis and their relatives.</title>
        <authorList>
            <person name="Steppan S.J."/>
            <person name="Ramirez O."/>
            <person name="Banbury J."/>
            <person name="Huchon D."/>
            <person name="Pacheco V."/>
            <person name="Walker L.I."/>
            <person name="Spotorno A.E."/>
        </authorList>
    </citation>
    <scope>NUCLEOTIDE SEQUENCE [GENOMIC DNA]</scope>
    <source>
        <strain>Isolate SA 02</strain>
        <strain>Isolate SA 03</strain>
    </source>
</reference>
<proteinExistence type="inferred from homology"/>
<gene>
    <name type="primary">MT-CYB</name>
    <name type="synonym">COB</name>
    <name type="synonym">CYTB</name>
    <name type="synonym">MTCYB</name>
</gene>
<accession>Q1XA12</accession>
<accession>Q1XA11</accession>
<protein>
    <recommendedName>
        <fullName>Cytochrome b</fullName>
    </recommendedName>
    <alternativeName>
        <fullName>Complex III subunit 3</fullName>
    </alternativeName>
    <alternativeName>
        <fullName>Complex III subunit III</fullName>
    </alternativeName>
    <alternativeName>
        <fullName>Cytochrome b-c1 complex subunit 3</fullName>
    </alternativeName>
    <alternativeName>
        <fullName>Ubiquinol-cytochrome-c reductase complex cytochrome b subunit</fullName>
    </alternativeName>
</protein>
<evidence type="ECO:0000250" key="1"/>
<evidence type="ECO:0000250" key="2">
    <source>
        <dbReference type="UniProtKB" id="P00157"/>
    </source>
</evidence>
<evidence type="ECO:0000255" key="3">
    <source>
        <dbReference type="PROSITE-ProRule" id="PRU00967"/>
    </source>
</evidence>
<evidence type="ECO:0000255" key="4">
    <source>
        <dbReference type="PROSITE-ProRule" id="PRU00968"/>
    </source>
</evidence>
<dbReference type="EMBL" id="AY956731">
    <property type="protein sequence ID" value="AAY32842.1"/>
    <property type="molecule type" value="Genomic_DNA"/>
</dbReference>
<dbReference type="EMBL" id="AY956732">
    <property type="protein sequence ID" value="AAY32843.1"/>
    <property type="molecule type" value="Genomic_DNA"/>
</dbReference>
<dbReference type="SMR" id="Q1XA12"/>
<dbReference type="GO" id="GO:0005743">
    <property type="term" value="C:mitochondrial inner membrane"/>
    <property type="evidence" value="ECO:0007669"/>
    <property type="project" value="UniProtKB-SubCell"/>
</dbReference>
<dbReference type="GO" id="GO:0045275">
    <property type="term" value="C:respiratory chain complex III"/>
    <property type="evidence" value="ECO:0007669"/>
    <property type="project" value="InterPro"/>
</dbReference>
<dbReference type="GO" id="GO:0046872">
    <property type="term" value="F:metal ion binding"/>
    <property type="evidence" value="ECO:0007669"/>
    <property type="project" value="UniProtKB-KW"/>
</dbReference>
<dbReference type="GO" id="GO:0008121">
    <property type="term" value="F:ubiquinol-cytochrome-c reductase activity"/>
    <property type="evidence" value="ECO:0007669"/>
    <property type="project" value="InterPro"/>
</dbReference>
<dbReference type="GO" id="GO:0006122">
    <property type="term" value="P:mitochondrial electron transport, ubiquinol to cytochrome c"/>
    <property type="evidence" value="ECO:0007669"/>
    <property type="project" value="TreeGrafter"/>
</dbReference>
<dbReference type="CDD" id="cd00290">
    <property type="entry name" value="cytochrome_b_C"/>
    <property type="match status" value="1"/>
</dbReference>
<dbReference type="CDD" id="cd00284">
    <property type="entry name" value="Cytochrome_b_N"/>
    <property type="match status" value="1"/>
</dbReference>
<dbReference type="FunFam" id="1.20.810.10:FF:000002">
    <property type="entry name" value="Cytochrome b"/>
    <property type="match status" value="1"/>
</dbReference>
<dbReference type="Gene3D" id="1.20.810.10">
    <property type="entry name" value="Cytochrome Bc1 Complex, Chain C"/>
    <property type="match status" value="1"/>
</dbReference>
<dbReference type="InterPro" id="IPR005798">
    <property type="entry name" value="Cyt_b/b6_C"/>
</dbReference>
<dbReference type="InterPro" id="IPR036150">
    <property type="entry name" value="Cyt_b/b6_C_sf"/>
</dbReference>
<dbReference type="InterPro" id="IPR005797">
    <property type="entry name" value="Cyt_b/b6_N"/>
</dbReference>
<dbReference type="InterPro" id="IPR027387">
    <property type="entry name" value="Cytb/b6-like_sf"/>
</dbReference>
<dbReference type="InterPro" id="IPR030689">
    <property type="entry name" value="Cytochrome_b"/>
</dbReference>
<dbReference type="InterPro" id="IPR048260">
    <property type="entry name" value="Cytochrome_b_C_euk/bac"/>
</dbReference>
<dbReference type="InterPro" id="IPR048259">
    <property type="entry name" value="Cytochrome_b_N_euk/bac"/>
</dbReference>
<dbReference type="InterPro" id="IPR016174">
    <property type="entry name" value="Di-haem_cyt_TM"/>
</dbReference>
<dbReference type="PANTHER" id="PTHR19271">
    <property type="entry name" value="CYTOCHROME B"/>
    <property type="match status" value="1"/>
</dbReference>
<dbReference type="PANTHER" id="PTHR19271:SF16">
    <property type="entry name" value="CYTOCHROME B"/>
    <property type="match status" value="1"/>
</dbReference>
<dbReference type="Pfam" id="PF00032">
    <property type="entry name" value="Cytochrom_B_C"/>
    <property type="match status" value="1"/>
</dbReference>
<dbReference type="Pfam" id="PF00033">
    <property type="entry name" value="Cytochrome_B"/>
    <property type="match status" value="1"/>
</dbReference>
<dbReference type="PIRSF" id="PIRSF038885">
    <property type="entry name" value="COB"/>
    <property type="match status" value="1"/>
</dbReference>
<dbReference type="SUPFAM" id="SSF81648">
    <property type="entry name" value="a domain/subunit of cytochrome bc1 complex (Ubiquinol-cytochrome c reductase)"/>
    <property type="match status" value="1"/>
</dbReference>
<dbReference type="SUPFAM" id="SSF81342">
    <property type="entry name" value="Transmembrane di-heme cytochromes"/>
    <property type="match status" value="1"/>
</dbReference>
<dbReference type="PROSITE" id="PS51003">
    <property type="entry name" value="CYTB_CTER"/>
    <property type="match status" value="1"/>
</dbReference>
<dbReference type="PROSITE" id="PS51002">
    <property type="entry name" value="CYTB_NTER"/>
    <property type="match status" value="1"/>
</dbReference>
<keyword id="KW-0249">Electron transport</keyword>
<keyword id="KW-0349">Heme</keyword>
<keyword id="KW-0408">Iron</keyword>
<keyword id="KW-0472">Membrane</keyword>
<keyword id="KW-0479">Metal-binding</keyword>
<keyword id="KW-0496">Mitochondrion</keyword>
<keyword id="KW-0999">Mitochondrion inner membrane</keyword>
<keyword id="KW-0679">Respiratory chain</keyword>
<keyword id="KW-0812">Transmembrane</keyword>
<keyword id="KW-1133">Transmembrane helix</keyword>
<keyword id="KW-0813">Transport</keyword>
<keyword id="KW-0830">Ubiquinone</keyword>
<name>CYB_PHYBN</name>
<geneLocation type="mitochondrion"/>
<sequence length="381" mass="43063">MTIMRKNHPLLKLVNNSFIDLPTPSSISSWWNFGSLLGVCLIMQILTGLFLAMHYTSDTATAFSSVTHICRDVNYGWLIRYLHANGASMFFICMFIHVGRGIYYGSYMLSETWNIGIILLLTTMATAFVGYVLPWGQMSFWGATVITNLLSAIPYIGTTLVEWIWGGFSVDKATLTRFFAFHFILPFIITAFVLVHLLFLHETGSNNPSGLNSDSDKIPFHPYYTIKDLLGVLLLLMVLMILVLFFPDVLGDPDNYTPANPLNTPAHIKPEWYFLFAYAILRSIPNKLGGVLALILSILVLALFPLINSSKQHGLVYRPITQIIYWIFIANLIILTWVGGQPVEYPFTMIGQIASIMYFSIIIIFMPMASMIENDILKLHY</sequence>